<keyword id="KW-0004">4Fe-4S</keyword>
<keyword id="KW-0408">Iron</keyword>
<keyword id="KW-0411">Iron-sulfur</keyword>
<keyword id="KW-0479">Metal-binding</keyword>
<keyword id="KW-0489">Methyltransferase</keyword>
<keyword id="KW-1185">Reference proteome</keyword>
<keyword id="KW-0698">rRNA processing</keyword>
<keyword id="KW-0949">S-adenosyl-L-methionine</keyword>
<keyword id="KW-0808">Transferase</keyword>
<reference key="1">
    <citation type="journal article" date="2007" name="Nat. Biotechnol.">
        <title>Genome sequence and identification of candidate vaccine antigens from the animal pathogen Dichelobacter nodosus.</title>
        <authorList>
            <person name="Myers G.S.A."/>
            <person name="Parker D."/>
            <person name="Al-Hasani K."/>
            <person name="Kennan R.M."/>
            <person name="Seemann T."/>
            <person name="Ren Q."/>
            <person name="Badger J.H."/>
            <person name="Selengut J.D."/>
            <person name="Deboy R.T."/>
            <person name="Tettelin H."/>
            <person name="Boyce J.D."/>
            <person name="McCarl V.P."/>
            <person name="Han X."/>
            <person name="Nelson W.C."/>
            <person name="Madupu R."/>
            <person name="Mohamoud Y."/>
            <person name="Holley T."/>
            <person name="Fedorova N."/>
            <person name="Khouri H."/>
            <person name="Bottomley S.P."/>
            <person name="Whittington R.J."/>
            <person name="Adler B."/>
            <person name="Songer J.G."/>
            <person name="Rood J.I."/>
            <person name="Paulsen I.T."/>
        </authorList>
    </citation>
    <scope>NUCLEOTIDE SEQUENCE [LARGE SCALE GENOMIC DNA]</scope>
    <source>
        <strain>VCS1703A</strain>
    </source>
</reference>
<protein>
    <recommendedName>
        <fullName evidence="1">23S rRNA (uracil(1939)-C(5))-methyltransferase RlmD</fullName>
        <ecNumber evidence="1">2.1.1.190</ecNumber>
    </recommendedName>
    <alternativeName>
        <fullName evidence="1">23S rRNA(m5U1939)-methyltransferase</fullName>
    </alternativeName>
</protein>
<proteinExistence type="inferred from homology"/>
<name>RLMD_DICNV</name>
<organism>
    <name type="scientific">Dichelobacter nodosus (strain VCS1703A)</name>
    <dbReference type="NCBI Taxonomy" id="246195"/>
    <lineage>
        <taxon>Bacteria</taxon>
        <taxon>Pseudomonadati</taxon>
        <taxon>Pseudomonadota</taxon>
        <taxon>Gammaproteobacteria</taxon>
        <taxon>Cardiobacteriales</taxon>
        <taxon>Cardiobacteriaceae</taxon>
        <taxon>Dichelobacter</taxon>
    </lineage>
</organism>
<feature type="chain" id="PRO_0000414801" description="23S rRNA (uracil(1939)-C(5))-methyltransferase RlmD">
    <location>
        <begin position="1"/>
        <end position="424"/>
    </location>
</feature>
<feature type="domain" description="TRAM" evidence="1">
    <location>
        <begin position="1"/>
        <end position="56"/>
    </location>
</feature>
<feature type="active site" description="Nucleophile" evidence="1">
    <location>
        <position position="380"/>
    </location>
</feature>
<feature type="binding site" evidence="1">
    <location>
        <position position="69"/>
    </location>
    <ligand>
        <name>[4Fe-4S] cluster</name>
        <dbReference type="ChEBI" id="CHEBI:49883"/>
    </ligand>
</feature>
<feature type="binding site" evidence="1">
    <location>
        <position position="75"/>
    </location>
    <ligand>
        <name>[4Fe-4S] cluster</name>
        <dbReference type="ChEBI" id="CHEBI:49883"/>
    </ligand>
</feature>
<feature type="binding site" evidence="1">
    <location>
        <position position="78"/>
    </location>
    <ligand>
        <name>[4Fe-4S] cluster</name>
        <dbReference type="ChEBI" id="CHEBI:49883"/>
    </ligand>
</feature>
<feature type="binding site" evidence="1">
    <location>
        <position position="155"/>
    </location>
    <ligand>
        <name>[4Fe-4S] cluster</name>
        <dbReference type="ChEBI" id="CHEBI:49883"/>
    </ligand>
</feature>
<feature type="binding site" evidence="1">
    <location>
        <position position="255"/>
    </location>
    <ligand>
        <name>S-adenosyl-L-methionine</name>
        <dbReference type="ChEBI" id="CHEBI:59789"/>
    </ligand>
</feature>
<feature type="binding site" evidence="1">
    <location>
        <position position="284"/>
    </location>
    <ligand>
        <name>S-adenosyl-L-methionine</name>
        <dbReference type="ChEBI" id="CHEBI:59789"/>
    </ligand>
</feature>
<feature type="binding site" evidence="1">
    <location>
        <position position="289"/>
    </location>
    <ligand>
        <name>S-adenosyl-L-methionine</name>
        <dbReference type="ChEBI" id="CHEBI:59789"/>
    </ligand>
</feature>
<feature type="binding site" evidence="1">
    <location>
        <position position="305"/>
    </location>
    <ligand>
        <name>S-adenosyl-L-methionine</name>
        <dbReference type="ChEBI" id="CHEBI:59789"/>
    </ligand>
</feature>
<feature type="binding site" evidence="1">
    <location>
        <position position="333"/>
    </location>
    <ligand>
        <name>S-adenosyl-L-methionine</name>
        <dbReference type="ChEBI" id="CHEBI:59789"/>
    </ligand>
</feature>
<feature type="binding site" evidence="1">
    <location>
        <position position="354"/>
    </location>
    <ligand>
        <name>S-adenosyl-L-methionine</name>
        <dbReference type="ChEBI" id="CHEBI:59789"/>
    </ligand>
</feature>
<dbReference type="EC" id="2.1.1.190" evidence="1"/>
<dbReference type="EMBL" id="CP000513">
    <property type="protein sequence ID" value="ABQ13190.1"/>
    <property type="molecule type" value="Genomic_DNA"/>
</dbReference>
<dbReference type="RefSeq" id="WP_012031390.1">
    <property type="nucleotide sequence ID" value="NC_009446.1"/>
</dbReference>
<dbReference type="SMR" id="A5EXR9"/>
<dbReference type="STRING" id="246195.DNO_1083"/>
<dbReference type="KEGG" id="dno:DNO_1083"/>
<dbReference type="eggNOG" id="COG2265">
    <property type="taxonomic scope" value="Bacteria"/>
</dbReference>
<dbReference type="HOGENOM" id="CLU_014689_8_2_6"/>
<dbReference type="OrthoDB" id="9804590at2"/>
<dbReference type="Proteomes" id="UP000000248">
    <property type="component" value="Chromosome"/>
</dbReference>
<dbReference type="GO" id="GO:0051539">
    <property type="term" value="F:4 iron, 4 sulfur cluster binding"/>
    <property type="evidence" value="ECO:0007669"/>
    <property type="project" value="UniProtKB-KW"/>
</dbReference>
<dbReference type="GO" id="GO:0005506">
    <property type="term" value="F:iron ion binding"/>
    <property type="evidence" value="ECO:0007669"/>
    <property type="project" value="UniProtKB-UniRule"/>
</dbReference>
<dbReference type="GO" id="GO:0003723">
    <property type="term" value="F:RNA binding"/>
    <property type="evidence" value="ECO:0007669"/>
    <property type="project" value="InterPro"/>
</dbReference>
<dbReference type="GO" id="GO:0070041">
    <property type="term" value="F:rRNA (uridine-C5-)-methyltransferase activity"/>
    <property type="evidence" value="ECO:0007669"/>
    <property type="project" value="UniProtKB-UniRule"/>
</dbReference>
<dbReference type="GO" id="GO:0070475">
    <property type="term" value="P:rRNA base methylation"/>
    <property type="evidence" value="ECO:0007669"/>
    <property type="project" value="TreeGrafter"/>
</dbReference>
<dbReference type="CDD" id="cd02440">
    <property type="entry name" value="AdoMet_MTases"/>
    <property type="match status" value="1"/>
</dbReference>
<dbReference type="FunFam" id="2.40.50.140:FF:000097">
    <property type="entry name" value="23S rRNA (uracil(1939)-C(5))-methyltransferase RlmD"/>
    <property type="match status" value="1"/>
</dbReference>
<dbReference type="Gene3D" id="2.40.50.1070">
    <property type="match status" value="1"/>
</dbReference>
<dbReference type="Gene3D" id="2.40.50.140">
    <property type="entry name" value="Nucleic acid-binding proteins"/>
    <property type="match status" value="1"/>
</dbReference>
<dbReference type="Gene3D" id="3.40.50.150">
    <property type="entry name" value="Vaccinia Virus protein VP39"/>
    <property type="match status" value="1"/>
</dbReference>
<dbReference type="HAMAP" id="MF_01010">
    <property type="entry name" value="23SrRNA_methyltr_RlmD"/>
    <property type="match status" value="1"/>
</dbReference>
<dbReference type="InterPro" id="IPR001566">
    <property type="entry name" value="23S_rRNA_MeTrfase_RlmD"/>
</dbReference>
<dbReference type="InterPro" id="IPR030390">
    <property type="entry name" value="MeTrfase_TrmA_AS"/>
</dbReference>
<dbReference type="InterPro" id="IPR012340">
    <property type="entry name" value="NA-bd_OB-fold"/>
</dbReference>
<dbReference type="InterPro" id="IPR029063">
    <property type="entry name" value="SAM-dependent_MTases_sf"/>
</dbReference>
<dbReference type="InterPro" id="IPR002792">
    <property type="entry name" value="TRAM_dom"/>
</dbReference>
<dbReference type="InterPro" id="IPR010280">
    <property type="entry name" value="U5_MeTrfase_fam"/>
</dbReference>
<dbReference type="PANTHER" id="PTHR11061:SF49">
    <property type="entry name" value="23S RRNA (URACIL(1939)-C(5))-METHYLTRANSFERASE RLMD"/>
    <property type="match status" value="1"/>
</dbReference>
<dbReference type="PANTHER" id="PTHR11061">
    <property type="entry name" value="RNA M5U METHYLTRANSFERASE"/>
    <property type="match status" value="1"/>
</dbReference>
<dbReference type="Pfam" id="PF01938">
    <property type="entry name" value="TRAM"/>
    <property type="match status" value="1"/>
</dbReference>
<dbReference type="Pfam" id="PF05958">
    <property type="entry name" value="tRNA_U5-meth_tr"/>
    <property type="match status" value="1"/>
</dbReference>
<dbReference type="SUPFAM" id="SSF50249">
    <property type="entry name" value="Nucleic acid-binding proteins"/>
    <property type="match status" value="1"/>
</dbReference>
<dbReference type="SUPFAM" id="SSF53335">
    <property type="entry name" value="S-adenosyl-L-methionine-dependent methyltransferases"/>
    <property type="match status" value="1"/>
</dbReference>
<dbReference type="PROSITE" id="PS51687">
    <property type="entry name" value="SAM_MT_RNA_M5U"/>
    <property type="match status" value="1"/>
</dbReference>
<dbReference type="PROSITE" id="PS50926">
    <property type="entry name" value="TRAM"/>
    <property type="match status" value="1"/>
</dbReference>
<dbReference type="PROSITE" id="PS01230">
    <property type="entry name" value="TRMA_1"/>
    <property type="match status" value="1"/>
</dbReference>
<evidence type="ECO:0000255" key="1">
    <source>
        <dbReference type="HAMAP-Rule" id="MF_01010"/>
    </source>
</evidence>
<sequence length="424" mass="47219">MEKFPAVTVFDLDYQGRGVAKIDGQVVFIEGALPDETVTFCKTSAKKQFIEAVVDEIIEPSPQRVAPRCPFYDRCGGCALQHWHSQEQLLGKQKLWLTQLQRLGGAQPEHVLLPLAGKEWRYRRRARLAVHYENDVIAVGFKAKRSHDVVAVNDCLILQEHLAAALPLLPDFLRALLPVKVDEILLTAGEKVAALTLRTKKRALSPAWGEKWANLAGAHWQLWENDRCLFGEPNDLYYQPISGVTLHFTPDDFIQVNASVNEALIQTVLAWLAPLEKSEVLDLFSGLGNFSLPLAYKGARVTAVEGVRAMVQRGAKMAAEQQLSSRLEMQCMDLFSVSAAQMKSWQSAKSWLLDPPRAGAHAVVQALPKKFPEKIVYVSCNPATLARDVAILQSKGFHLERGQVVNMFAHSAHIESVILMTRTI</sequence>
<gene>
    <name evidence="1" type="primary">rlmD</name>
    <name type="ordered locus">DNO_1083</name>
</gene>
<comment type="function">
    <text evidence="1">Catalyzes the formation of 5-methyl-uridine at position 1939 (m5U1939) in 23S rRNA.</text>
</comment>
<comment type="catalytic activity">
    <reaction evidence="1">
        <text>uridine(1939) in 23S rRNA + S-adenosyl-L-methionine = 5-methyluridine(1939) in 23S rRNA + S-adenosyl-L-homocysteine + H(+)</text>
        <dbReference type="Rhea" id="RHEA:42908"/>
        <dbReference type="Rhea" id="RHEA-COMP:10278"/>
        <dbReference type="Rhea" id="RHEA-COMP:10279"/>
        <dbReference type="ChEBI" id="CHEBI:15378"/>
        <dbReference type="ChEBI" id="CHEBI:57856"/>
        <dbReference type="ChEBI" id="CHEBI:59789"/>
        <dbReference type="ChEBI" id="CHEBI:65315"/>
        <dbReference type="ChEBI" id="CHEBI:74447"/>
        <dbReference type="EC" id="2.1.1.190"/>
    </reaction>
</comment>
<comment type="similarity">
    <text evidence="1">Belongs to the class I-like SAM-binding methyltransferase superfamily. RNA M5U methyltransferase family. RlmD subfamily.</text>
</comment>
<accession>A5EXR9</accession>